<comment type="function">
    <text evidence="1">One of the early assembly proteins it binds 23S rRNA. One of the proteins that surrounds the polypeptide exit tunnel on the outside of the ribosome. Forms the main docking site for trigger factor binding to the ribosome.</text>
</comment>
<comment type="subunit">
    <text evidence="1">Part of the 50S ribosomal subunit. Contacts protein L29, and trigger factor when it is bound to the ribosome.</text>
</comment>
<comment type="similarity">
    <text evidence="1">Belongs to the universal ribosomal protein uL23 family.</text>
</comment>
<reference key="1">
    <citation type="submission" date="2008-06" db="EMBL/GenBank/DDBJ databases">
        <title>Complete sequence of Pelodictyon phaeoclathratiforme BU-1.</title>
        <authorList>
            <consortium name="US DOE Joint Genome Institute"/>
            <person name="Lucas S."/>
            <person name="Copeland A."/>
            <person name="Lapidus A."/>
            <person name="Glavina del Rio T."/>
            <person name="Dalin E."/>
            <person name="Tice H."/>
            <person name="Bruce D."/>
            <person name="Goodwin L."/>
            <person name="Pitluck S."/>
            <person name="Schmutz J."/>
            <person name="Larimer F."/>
            <person name="Land M."/>
            <person name="Hauser L."/>
            <person name="Kyrpides N."/>
            <person name="Mikhailova N."/>
            <person name="Liu Z."/>
            <person name="Li T."/>
            <person name="Zhao F."/>
            <person name="Overmann J."/>
            <person name="Bryant D.A."/>
            <person name="Richardson P."/>
        </authorList>
    </citation>
    <scope>NUCLEOTIDE SEQUENCE [LARGE SCALE GENOMIC DNA]</scope>
    <source>
        <strain>DSM 5477 / BU-1</strain>
    </source>
</reference>
<accession>B4SBU9</accession>
<name>RL23_PELPB</name>
<keyword id="KW-1185">Reference proteome</keyword>
<keyword id="KW-0687">Ribonucleoprotein</keyword>
<keyword id="KW-0689">Ribosomal protein</keyword>
<keyword id="KW-0694">RNA-binding</keyword>
<keyword id="KW-0699">rRNA-binding</keyword>
<feature type="chain" id="PRO_1000144595" description="Large ribosomal subunit protein uL23">
    <location>
        <begin position="1"/>
        <end position="103"/>
    </location>
</feature>
<gene>
    <name evidence="1" type="primary">rplW</name>
    <name type="ordered locus">Ppha_0291</name>
</gene>
<evidence type="ECO:0000255" key="1">
    <source>
        <dbReference type="HAMAP-Rule" id="MF_01369"/>
    </source>
</evidence>
<evidence type="ECO:0000305" key="2"/>
<protein>
    <recommendedName>
        <fullName evidence="1">Large ribosomal subunit protein uL23</fullName>
    </recommendedName>
    <alternativeName>
        <fullName evidence="2">50S ribosomal protein L23</fullName>
    </alternativeName>
</protein>
<sequence>MINPLLRPLLTEKSTGLTEKKGQYVFVVKPDADKTDIKKAVEKKFGVEVKSIRTINCLGKSRAQNTRKGRVTGKKSDWKKAIITLEKGQSIDYYSNTAQKSEG</sequence>
<organism>
    <name type="scientific">Pelodictyon phaeoclathratiforme (strain DSM 5477 / BU-1)</name>
    <dbReference type="NCBI Taxonomy" id="324925"/>
    <lineage>
        <taxon>Bacteria</taxon>
        <taxon>Pseudomonadati</taxon>
        <taxon>Chlorobiota</taxon>
        <taxon>Chlorobiia</taxon>
        <taxon>Chlorobiales</taxon>
        <taxon>Chlorobiaceae</taxon>
        <taxon>Chlorobium/Pelodictyon group</taxon>
        <taxon>Pelodictyon</taxon>
    </lineage>
</organism>
<dbReference type="EMBL" id="CP001110">
    <property type="protein sequence ID" value="ACF42624.1"/>
    <property type="molecule type" value="Genomic_DNA"/>
</dbReference>
<dbReference type="RefSeq" id="WP_012507120.1">
    <property type="nucleotide sequence ID" value="NC_011060.1"/>
</dbReference>
<dbReference type="SMR" id="B4SBU9"/>
<dbReference type="STRING" id="324925.Ppha_0291"/>
<dbReference type="KEGG" id="pph:Ppha_0291"/>
<dbReference type="eggNOG" id="COG0089">
    <property type="taxonomic scope" value="Bacteria"/>
</dbReference>
<dbReference type="HOGENOM" id="CLU_037562_3_1_10"/>
<dbReference type="OrthoDB" id="9797862at2"/>
<dbReference type="Proteomes" id="UP000002724">
    <property type="component" value="Chromosome"/>
</dbReference>
<dbReference type="GO" id="GO:1990904">
    <property type="term" value="C:ribonucleoprotein complex"/>
    <property type="evidence" value="ECO:0007669"/>
    <property type="project" value="UniProtKB-KW"/>
</dbReference>
<dbReference type="GO" id="GO:0005840">
    <property type="term" value="C:ribosome"/>
    <property type="evidence" value="ECO:0007669"/>
    <property type="project" value="UniProtKB-KW"/>
</dbReference>
<dbReference type="GO" id="GO:0019843">
    <property type="term" value="F:rRNA binding"/>
    <property type="evidence" value="ECO:0007669"/>
    <property type="project" value="UniProtKB-UniRule"/>
</dbReference>
<dbReference type="GO" id="GO:0003735">
    <property type="term" value="F:structural constituent of ribosome"/>
    <property type="evidence" value="ECO:0007669"/>
    <property type="project" value="InterPro"/>
</dbReference>
<dbReference type="GO" id="GO:0006412">
    <property type="term" value="P:translation"/>
    <property type="evidence" value="ECO:0007669"/>
    <property type="project" value="UniProtKB-UniRule"/>
</dbReference>
<dbReference type="FunFam" id="3.30.70.330:FF:000001">
    <property type="entry name" value="50S ribosomal protein L23"/>
    <property type="match status" value="1"/>
</dbReference>
<dbReference type="Gene3D" id="3.30.70.330">
    <property type="match status" value="1"/>
</dbReference>
<dbReference type="HAMAP" id="MF_01369_B">
    <property type="entry name" value="Ribosomal_uL23_B"/>
    <property type="match status" value="1"/>
</dbReference>
<dbReference type="InterPro" id="IPR012677">
    <property type="entry name" value="Nucleotide-bd_a/b_plait_sf"/>
</dbReference>
<dbReference type="InterPro" id="IPR013025">
    <property type="entry name" value="Ribosomal_uL23-like"/>
</dbReference>
<dbReference type="InterPro" id="IPR012678">
    <property type="entry name" value="Ribosomal_uL23/eL15/eS24_sf"/>
</dbReference>
<dbReference type="NCBIfam" id="NF004359">
    <property type="entry name" value="PRK05738.1-3"/>
    <property type="match status" value="1"/>
</dbReference>
<dbReference type="NCBIfam" id="NF004363">
    <property type="entry name" value="PRK05738.2-4"/>
    <property type="match status" value="1"/>
</dbReference>
<dbReference type="PANTHER" id="PTHR11620">
    <property type="entry name" value="60S RIBOSOMAL PROTEIN L23A"/>
    <property type="match status" value="1"/>
</dbReference>
<dbReference type="Pfam" id="PF00276">
    <property type="entry name" value="Ribosomal_L23"/>
    <property type="match status" value="1"/>
</dbReference>
<dbReference type="SUPFAM" id="SSF54189">
    <property type="entry name" value="Ribosomal proteins S24e, L23 and L15e"/>
    <property type="match status" value="1"/>
</dbReference>
<proteinExistence type="inferred from homology"/>